<keyword id="KW-0687">Ribonucleoprotein</keyword>
<keyword id="KW-0689">Ribosomal protein</keyword>
<keyword id="KW-0694">RNA-binding</keyword>
<keyword id="KW-0699">rRNA-binding</keyword>
<gene>
    <name evidence="1" type="primary">rplU</name>
    <name type="ordered locus">RHA1_ro01313</name>
</gene>
<proteinExistence type="inferred from homology"/>
<dbReference type="EMBL" id="CP000431">
    <property type="protein sequence ID" value="ABG93137.1"/>
    <property type="molecule type" value="Genomic_DNA"/>
</dbReference>
<dbReference type="RefSeq" id="WP_005248081.1">
    <property type="nucleotide sequence ID" value="NC_008268.1"/>
</dbReference>
<dbReference type="SMR" id="Q0SH49"/>
<dbReference type="GeneID" id="69892974"/>
<dbReference type="KEGG" id="rha:RHA1_ro01313"/>
<dbReference type="eggNOG" id="COG0261">
    <property type="taxonomic scope" value="Bacteria"/>
</dbReference>
<dbReference type="HOGENOM" id="CLU_061463_3_0_11"/>
<dbReference type="OrthoDB" id="9813334at2"/>
<dbReference type="Proteomes" id="UP000008710">
    <property type="component" value="Chromosome"/>
</dbReference>
<dbReference type="GO" id="GO:0005737">
    <property type="term" value="C:cytoplasm"/>
    <property type="evidence" value="ECO:0007669"/>
    <property type="project" value="UniProtKB-ARBA"/>
</dbReference>
<dbReference type="GO" id="GO:1990904">
    <property type="term" value="C:ribonucleoprotein complex"/>
    <property type="evidence" value="ECO:0007669"/>
    <property type="project" value="UniProtKB-KW"/>
</dbReference>
<dbReference type="GO" id="GO:0005840">
    <property type="term" value="C:ribosome"/>
    <property type="evidence" value="ECO:0007669"/>
    <property type="project" value="UniProtKB-KW"/>
</dbReference>
<dbReference type="GO" id="GO:0019843">
    <property type="term" value="F:rRNA binding"/>
    <property type="evidence" value="ECO:0007669"/>
    <property type="project" value="UniProtKB-UniRule"/>
</dbReference>
<dbReference type="GO" id="GO:0003735">
    <property type="term" value="F:structural constituent of ribosome"/>
    <property type="evidence" value="ECO:0007669"/>
    <property type="project" value="InterPro"/>
</dbReference>
<dbReference type="GO" id="GO:0006412">
    <property type="term" value="P:translation"/>
    <property type="evidence" value="ECO:0007669"/>
    <property type="project" value="UniProtKB-UniRule"/>
</dbReference>
<dbReference type="HAMAP" id="MF_01363">
    <property type="entry name" value="Ribosomal_bL21"/>
    <property type="match status" value="1"/>
</dbReference>
<dbReference type="InterPro" id="IPR028909">
    <property type="entry name" value="bL21-like"/>
</dbReference>
<dbReference type="InterPro" id="IPR036164">
    <property type="entry name" value="bL21-like_sf"/>
</dbReference>
<dbReference type="InterPro" id="IPR001787">
    <property type="entry name" value="Ribosomal_bL21"/>
</dbReference>
<dbReference type="InterPro" id="IPR018258">
    <property type="entry name" value="Ribosomal_bL21_CS"/>
</dbReference>
<dbReference type="NCBIfam" id="TIGR00061">
    <property type="entry name" value="L21"/>
    <property type="match status" value="1"/>
</dbReference>
<dbReference type="PANTHER" id="PTHR21349">
    <property type="entry name" value="50S RIBOSOMAL PROTEIN L21"/>
    <property type="match status" value="1"/>
</dbReference>
<dbReference type="PANTHER" id="PTHR21349:SF0">
    <property type="entry name" value="LARGE RIBOSOMAL SUBUNIT PROTEIN BL21M"/>
    <property type="match status" value="1"/>
</dbReference>
<dbReference type="Pfam" id="PF00829">
    <property type="entry name" value="Ribosomal_L21p"/>
    <property type="match status" value="1"/>
</dbReference>
<dbReference type="SUPFAM" id="SSF141091">
    <property type="entry name" value="L21p-like"/>
    <property type="match status" value="1"/>
</dbReference>
<dbReference type="PROSITE" id="PS01169">
    <property type="entry name" value="RIBOSOMAL_L21"/>
    <property type="match status" value="1"/>
</dbReference>
<sequence length="103" mass="11121">MATYAIVKTGGKQYKVAVGDLVKVEKIEGEPGTAVSLAPVLVVDGSDLTTDADKLAKISVTGEVVEHTKGPKIRIHKFKNKTGYHKRQGHRQKLTVLKVTGIK</sequence>
<evidence type="ECO:0000255" key="1">
    <source>
        <dbReference type="HAMAP-Rule" id="MF_01363"/>
    </source>
</evidence>
<evidence type="ECO:0000305" key="2"/>
<organism>
    <name type="scientific">Rhodococcus jostii (strain RHA1)</name>
    <dbReference type="NCBI Taxonomy" id="101510"/>
    <lineage>
        <taxon>Bacteria</taxon>
        <taxon>Bacillati</taxon>
        <taxon>Actinomycetota</taxon>
        <taxon>Actinomycetes</taxon>
        <taxon>Mycobacteriales</taxon>
        <taxon>Nocardiaceae</taxon>
        <taxon>Rhodococcus</taxon>
    </lineage>
</organism>
<reference key="1">
    <citation type="journal article" date="2006" name="Proc. Natl. Acad. Sci. U.S.A.">
        <title>The complete genome of Rhodococcus sp. RHA1 provides insights into a catabolic powerhouse.</title>
        <authorList>
            <person name="McLeod M.P."/>
            <person name="Warren R.L."/>
            <person name="Hsiao W.W.L."/>
            <person name="Araki N."/>
            <person name="Myhre M."/>
            <person name="Fernandes C."/>
            <person name="Miyazawa D."/>
            <person name="Wong W."/>
            <person name="Lillquist A.L."/>
            <person name="Wang D."/>
            <person name="Dosanjh M."/>
            <person name="Hara H."/>
            <person name="Petrescu A."/>
            <person name="Morin R.D."/>
            <person name="Yang G."/>
            <person name="Stott J.M."/>
            <person name="Schein J.E."/>
            <person name="Shin H."/>
            <person name="Smailus D."/>
            <person name="Siddiqui A.S."/>
            <person name="Marra M.A."/>
            <person name="Jones S.J.M."/>
            <person name="Holt R."/>
            <person name="Brinkman F.S.L."/>
            <person name="Miyauchi K."/>
            <person name="Fukuda M."/>
            <person name="Davies J.E."/>
            <person name="Mohn W.W."/>
            <person name="Eltis L.D."/>
        </authorList>
    </citation>
    <scope>NUCLEOTIDE SEQUENCE [LARGE SCALE GENOMIC DNA]</scope>
    <source>
        <strain>RHA1</strain>
    </source>
</reference>
<protein>
    <recommendedName>
        <fullName evidence="1">Large ribosomal subunit protein bL21</fullName>
    </recommendedName>
    <alternativeName>
        <fullName evidence="2">50S ribosomal protein L21</fullName>
    </alternativeName>
</protein>
<name>RL21_RHOJR</name>
<feature type="chain" id="PRO_0000270721" description="Large ribosomal subunit protein bL21">
    <location>
        <begin position="1"/>
        <end position="103"/>
    </location>
</feature>
<accession>Q0SH49</accession>
<comment type="function">
    <text evidence="1">This protein binds to 23S rRNA in the presence of protein L20.</text>
</comment>
<comment type="subunit">
    <text evidence="1">Part of the 50S ribosomal subunit. Contacts protein L20.</text>
</comment>
<comment type="similarity">
    <text evidence="1">Belongs to the bacterial ribosomal protein bL21 family.</text>
</comment>